<organism>
    <name type="scientific">Streptococcus pneumoniae serotype 2 (strain D39 / NCTC 7466)</name>
    <dbReference type="NCBI Taxonomy" id="373153"/>
    <lineage>
        <taxon>Bacteria</taxon>
        <taxon>Bacillati</taxon>
        <taxon>Bacillota</taxon>
        <taxon>Bacilli</taxon>
        <taxon>Lactobacillales</taxon>
        <taxon>Streptococcaceae</taxon>
        <taxon>Streptococcus</taxon>
    </lineage>
</organism>
<sequence length="212" mass="24466">MQNRPIIIGVTGGSGGGKTSVSRAILSHFPDEKISMIEHDSYYKDQSHLTFEERVKTNYDHPFAFDTDLMIEQIKELLAGRPVDIPTYDYTEHTRSSKTYRQEPQDVFIVEGILVLEDKRLRDLMDIKIFVDTDDDVRIIRRIKRDMEERGRSLDSVINQYLGVVKPMYHQFIESTKRYADIVIPEGVSNTVAIDLLTTKIAKILEEARNSK</sequence>
<reference key="1">
    <citation type="journal article" date="2007" name="J. Bacteriol.">
        <title>Genome sequence of Avery's virulent serotype 2 strain D39 of Streptococcus pneumoniae and comparison with that of unencapsulated laboratory strain R6.</title>
        <authorList>
            <person name="Lanie J.A."/>
            <person name="Ng W.-L."/>
            <person name="Kazmierczak K.M."/>
            <person name="Andrzejewski T.M."/>
            <person name="Davidsen T.M."/>
            <person name="Wayne K.J."/>
            <person name="Tettelin H."/>
            <person name="Glass J.I."/>
            <person name="Winkler M.E."/>
        </authorList>
    </citation>
    <scope>NUCLEOTIDE SEQUENCE [LARGE SCALE GENOMIC DNA]</scope>
    <source>
        <strain>D39 / NCTC 7466</strain>
    </source>
</reference>
<evidence type="ECO:0000255" key="1">
    <source>
        <dbReference type="HAMAP-Rule" id="MF_00551"/>
    </source>
</evidence>
<protein>
    <recommendedName>
        <fullName evidence="1">Uridine kinase</fullName>
        <ecNumber evidence="1">2.7.1.48</ecNumber>
    </recommendedName>
    <alternativeName>
        <fullName evidence="1">Cytidine monophosphokinase</fullName>
    </alternativeName>
    <alternativeName>
        <fullName evidence="1">Uridine monophosphokinase</fullName>
    </alternativeName>
</protein>
<dbReference type="EC" id="2.7.1.48" evidence="1"/>
<dbReference type="EMBL" id="CP000410">
    <property type="protein sequence ID" value="ABJ54635.1"/>
    <property type="molecule type" value="Genomic_DNA"/>
</dbReference>
<dbReference type="RefSeq" id="WP_001181378.1">
    <property type="nucleotide sequence ID" value="NZ_JAMLJR010000006.1"/>
</dbReference>
<dbReference type="SMR" id="Q04KA9"/>
<dbReference type="PaxDb" id="373153-SPD_1068"/>
<dbReference type="GeneID" id="45653496"/>
<dbReference type="KEGG" id="spd:SPD_1068"/>
<dbReference type="eggNOG" id="COG0572">
    <property type="taxonomic scope" value="Bacteria"/>
</dbReference>
<dbReference type="HOGENOM" id="CLU_021278_1_2_9"/>
<dbReference type="BioCyc" id="SPNE373153:G1G6V-1158-MONOMER"/>
<dbReference type="UniPathway" id="UPA00574">
    <property type="reaction ID" value="UER00637"/>
</dbReference>
<dbReference type="UniPathway" id="UPA00579">
    <property type="reaction ID" value="UER00640"/>
</dbReference>
<dbReference type="Proteomes" id="UP000001452">
    <property type="component" value="Chromosome"/>
</dbReference>
<dbReference type="GO" id="GO:0005737">
    <property type="term" value="C:cytoplasm"/>
    <property type="evidence" value="ECO:0007669"/>
    <property type="project" value="UniProtKB-SubCell"/>
</dbReference>
<dbReference type="GO" id="GO:0005524">
    <property type="term" value="F:ATP binding"/>
    <property type="evidence" value="ECO:0007669"/>
    <property type="project" value="UniProtKB-UniRule"/>
</dbReference>
<dbReference type="GO" id="GO:0043771">
    <property type="term" value="F:cytidine kinase activity"/>
    <property type="evidence" value="ECO:0007669"/>
    <property type="project" value="RHEA"/>
</dbReference>
<dbReference type="GO" id="GO:0004849">
    <property type="term" value="F:uridine kinase activity"/>
    <property type="evidence" value="ECO:0007669"/>
    <property type="project" value="UniProtKB-UniRule"/>
</dbReference>
<dbReference type="GO" id="GO:0044211">
    <property type="term" value="P:CTP salvage"/>
    <property type="evidence" value="ECO:0007669"/>
    <property type="project" value="UniProtKB-UniRule"/>
</dbReference>
<dbReference type="GO" id="GO:0044206">
    <property type="term" value="P:UMP salvage"/>
    <property type="evidence" value="ECO:0007669"/>
    <property type="project" value="UniProtKB-UniRule"/>
</dbReference>
<dbReference type="CDD" id="cd02023">
    <property type="entry name" value="UMPK"/>
    <property type="match status" value="1"/>
</dbReference>
<dbReference type="Gene3D" id="3.40.50.300">
    <property type="entry name" value="P-loop containing nucleotide triphosphate hydrolases"/>
    <property type="match status" value="1"/>
</dbReference>
<dbReference type="HAMAP" id="MF_00551">
    <property type="entry name" value="Uridine_kinase"/>
    <property type="match status" value="1"/>
</dbReference>
<dbReference type="InterPro" id="IPR027417">
    <property type="entry name" value="P-loop_NTPase"/>
</dbReference>
<dbReference type="InterPro" id="IPR006083">
    <property type="entry name" value="PRK/URK"/>
</dbReference>
<dbReference type="InterPro" id="IPR026008">
    <property type="entry name" value="Uridine_kinase"/>
</dbReference>
<dbReference type="InterPro" id="IPR000764">
    <property type="entry name" value="Uridine_kinase-like"/>
</dbReference>
<dbReference type="NCBIfam" id="NF004018">
    <property type="entry name" value="PRK05480.1"/>
    <property type="match status" value="1"/>
</dbReference>
<dbReference type="NCBIfam" id="TIGR00235">
    <property type="entry name" value="udk"/>
    <property type="match status" value="1"/>
</dbReference>
<dbReference type="PANTHER" id="PTHR10285">
    <property type="entry name" value="URIDINE KINASE"/>
    <property type="match status" value="1"/>
</dbReference>
<dbReference type="Pfam" id="PF00485">
    <property type="entry name" value="PRK"/>
    <property type="match status" value="1"/>
</dbReference>
<dbReference type="PRINTS" id="PR00988">
    <property type="entry name" value="URIDINKINASE"/>
</dbReference>
<dbReference type="SUPFAM" id="SSF52540">
    <property type="entry name" value="P-loop containing nucleoside triphosphate hydrolases"/>
    <property type="match status" value="1"/>
</dbReference>
<gene>
    <name evidence="1" type="primary">udk</name>
    <name type="ordered locus">SPD_1068</name>
</gene>
<keyword id="KW-0067">ATP-binding</keyword>
<keyword id="KW-0963">Cytoplasm</keyword>
<keyword id="KW-0418">Kinase</keyword>
<keyword id="KW-0547">Nucleotide-binding</keyword>
<keyword id="KW-1185">Reference proteome</keyword>
<keyword id="KW-0808">Transferase</keyword>
<name>URK_STRP2</name>
<accession>Q04KA9</accession>
<comment type="catalytic activity">
    <reaction evidence="1">
        <text>uridine + ATP = UMP + ADP + H(+)</text>
        <dbReference type="Rhea" id="RHEA:16825"/>
        <dbReference type="ChEBI" id="CHEBI:15378"/>
        <dbReference type="ChEBI" id="CHEBI:16704"/>
        <dbReference type="ChEBI" id="CHEBI:30616"/>
        <dbReference type="ChEBI" id="CHEBI:57865"/>
        <dbReference type="ChEBI" id="CHEBI:456216"/>
        <dbReference type="EC" id="2.7.1.48"/>
    </reaction>
</comment>
<comment type="catalytic activity">
    <reaction evidence="1">
        <text>cytidine + ATP = CMP + ADP + H(+)</text>
        <dbReference type="Rhea" id="RHEA:24674"/>
        <dbReference type="ChEBI" id="CHEBI:15378"/>
        <dbReference type="ChEBI" id="CHEBI:17562"/>
        <dbReference type="ChEBI" id="CHEBI:30616"/>
        <dbReference type="ChEBI" id="CHEBI:60377"/>
        <dbReference type="ChEBI" id="CHEBI:456216"/>
        <dbReference type="EC" id="2.7.1.48"/>
    </reaction>
</comment>
<comment type="pathway">
    <text evidence="1">Pyrimidine metabolism; CTP biosynthesis via salvage pathway; CTP from cytidine: step 1/3.</text>
</comment>
<comment type="pathway">
    <text evidence="1">Pyrimidine metabolism; UMP biosynthesis via salvage pathway; UMP from uridine: step 1/1.</text>
</comment>
<comment type="subcellular location">
    <subcellularLocation>
        <location evidence="1">Cytoplasm</location>
    </subcellularLocation>
</comment>
<comment type="similarity">
    <text evidence="1">Belongs to the uridine kinase family.</text>
</comment>
<feature type="chain" id="PRO_1000017908" description="Uridine kinase">
    <location>
        <begin position="1"/>
        <end position="212"/>
    </location>
</feature>
<feature type="binding site" evidence="1">
    <location>
        <begin position="12"/>
        <end position="19"/>
    </location>
    <ligand>
        <name>ATP</name>
        <dbReference type="ChEBI" id="CHEBI:30616"/>
    </ligand>
</feature>
<proteinExistence type="inferred from homology"/>